<accession>A6N6I9</accession>
<protein>
    <recommendedName>
        <fullName>Interleukin-17F</fullName>
        <shortName>IL-17F</shortName>
    </recommendedName>
</protein>
<keyword id="KW-1064">Adaptive immunity</keyword>
<keyword id="KW-0202">Cytokine</keyword>
<keyword id="KW-1015">Disulfide bond</keyword>
<keyword id="KW-0325">Glycoprotein</keyword>
<keyword id="KW-0391">Immunity</keyword>
<keyword id="KW-0395">Inflammatory response</keyword>
<keyword id="KW-0399">Innate immunity</keyword>
<keyword id="KW-1185">Reference proteome</keyword>
<keyword id="KW-0964">Secreted</keyword>
<keyword id="KW-0732">Signal</keyword>
<sequence length="163" mass="18403">MTVKSLHVTAMVKYLLLLILGLAFLRETAAQRVPKEGQTFFQKPESCPSVPEGSLKLDLGIINANQRVPLSRNIERRSTSPWNYTVTWDPNRYPSEVVQAQCRHLGCVNAQGKEDIFMNSVPIQQETLVLRRKHQGCSVSFQLEKLLVTVGCTCVKPLIHHVH</sequence>
<gene>
    <name type="primary">IL17F</name>
</gene>
<name>IL17F_CALJA</name>
<proteinExistence type="evidence at transcript level"/>
<evidence type="ECO:0000250" key="1">
    <source>
        <dbReference type="UniProtKB" id="Q7TNI7"/>
    </source>
</evidence>
<evidence type="ECO:0000250" key="2">
    <source>
        <dbReference type="UniProtKB" id="Q96PD4"/>
    </source>
</evidence>
<evidence type="ECO:0000305" key="3"/>
<organism>
    <name type="scientific">Callithrix jacchus</name>
    <name type="common">White-tufted-ear marmoset</name>
    <dbReference type="NCBI Taxonomy" id="9483"/>
    <lineage>
        <taxon>Eukaryota</taxon>
        <taxon>Metazoa</taxon>
        <taxon>Chordata</taxon>
        <taxon>Craniata</taxon>
        <taxon>Vertebrata</taxon>
        <taxon>Euteleostomi</taxon>
        <taxon>Mammalia</taxon>
        <taxon>Eutheria</taxon>
        <taxon>Euarchontoglires</taxon>
        <taxon>Primates</taxon>
        <taxon>Haplorrhini</taxon>
        <taxon>Platyrrhini</taxon>
        <taxon>Cebidae</taxon>
        <taxon>Callitrichinae</taxon>
        <taxon>Callithrix</taxon>
        <taxon>Callithrix</taxon>
    </lineage>
</organism>
<reference key="1">
    <citation type="submission" date="2007-05" db="EMBL/GenBank/DDBJ databases">
        <authorList>
            <person name="Matsuzaki A."/>
            <person name="Kohu K."/>
            <person name="Onda D."/>
            <person name="Suemizu H."/>
            <person name="Yagita H."/>
            <person name="Suzuki D."/>
            <person name="Kametani Y."/>
            <person name="Habu S."/>
            <person name="Satake M."/>
        </authorList>
    </citation>
    <scope>NUCLEOTIDE SEQUENCE [MRNA]</scope>
</reference>
<comment type="function">
    <text evidence="1 2">Effector cytokine of innate and adaptive immune system involved in antimicrobial host defense and maintenance of tissue integrity. IL17A-IL17F signals via IL17RA-IL17RC heterodimeric receptor complex, triggering homotypic interaction of IL17RA and IL17RC chains with TRAF3IP2 adapter through SEFIR domains. This leads to downstream TRAF6-mediated activation of NF-kappa-B and MAPkinase pathways ultimately resulting in transcriptional activation of cytokines, chemokines, antimicrobial peptides and matrix metalloproteinases, with potential strong immune inflammation. IL17A-IL17F is primarily involved in host defense against extracellular bacteria and fungi by inducing neutrophilic inflammation. As signature effector cytokine of T-helper 17 cells (Th17), primarily induces neutrophil activation and recruitment at infection and inflammatory sites. Stimulates the production of antimicrobial beta-defensins DEFB1, DEFB103A, and DEFB104A by mucosal epithelial cells, limiting the entry of microbes through the epithelial barriers. IL17F homodimer can signal via IL17RC homodimeric receptor complex, triggering downstream activation of TRAF6 and NF-kappa-B signaling pathway. Via IL17RC induces transcriptional activation of IL33, a potent cytokine that stimulates group 2 innate lymphoid cells and adaptive T-helper 2 cells involved in pulmonary allergic response to fungi. Likely via IL17RC, promotes sympathetic innervation of peripheral organs by coordinating the communication between gamma-delta T cells and parenchymal cells. Stimulates sympathetic innervation of thermogenic adipose tissue by driving TGFB1 expression. Regulates the composition of intestinal microbiota and immune tolerance by inducing antimicrobial proteins that specifically control the growth of commensal Firmicutes and Bacteroidetes.</text>
</comment>
<comment type="subunit">
    <text evidence="1 2">Homodimer; disulfide-linked (By similarity). Heterodimer with IL17A (IL17A-IL17F) (By similarity). Forms complexes with IL17RA and IL17RC receptors with 2:1 binding stoichiometry: two receptor chains for one interleukin molecule. IL17F homodimer forms predominantly complexes with IL17RC homodimer, whereas IL17A-IL17F favors complexes with IL17RA-IL17RC. IL17RA and IL17RC chains cannot distinguish between IL17A and IL17F molecules, potentially enabling the formation of topologically distinct complexes (By similarity).</text>
</comment>
<comment type="subcellular location">
    <subcellularLocation>
        <location evidence="1">Secreted</location>
    </subcellularLocation>
</comment>
<comment type="similarity">
    <text evidence="3">Belongs to the IL-17 family.</text>
</comment>
<dbReference type="EMBL" id="EF613223">
    <property type="protein sequence ID" value="ABR09547.1"/>
    <property type="molecule type" value="mRNA"/>
</dbReference>
<dbReference type="RefSeq" id="XP_017826645.1">
    <property type="nucleotide sequence ID" value="XM_017971156.3"/>
</dbReference>
<dbReference type="SMR" id="A6N6I9"/>
<dbReference type="FunCoup" id="A6N6I9">
    <property type="interactions" value="383"/>
</dbReference>
<dbReference type="STRING" id="9483.ENSCJAP00000062180"/>
<dbReference type="GlyCosmos" id="A6N6I9">
    <property type="glycosylation" value="1 site, No reported glycans"/>
</dbReference>
<dbReference type="Ensembl" id="ENSCJAT00000085081.3">
    <property type="protein sequence ID" value="ENSCJAP00000062180.1"/>
    <property type="gene ID" value="ENSCJAG00000043579.3"/>
</dbReference>
<dbReference type="GeneID" id="100397735"/>
<dbReference type="KEGG" id="cjc:100397735"/>
<dbReference type="CTD" id="112744"/>
<dbReference type="eggNOG" id="ENOG502S5A0">
    <property type="taxonomic scope" value="Eukaryota"/>
</dbReference>
<dbReference type="GeneTree" id="ENSGT00940000156618"/>
<dbReference type="HOGENOM" id="CLU_118641_0_0_1"/>
<dbReference type="InParanoid" id="A6N6I9"/>
<dbReference type="OrthoDB" id="6093351at2759"/>
<dbReference type="TreeFam" id="TF314701"/>
<dbReference type="Proteomes" id="UP000008225">
    <property type="component" value="Chromosome 4"/>
</dbReference>
<dbReference type="Bgee" id="ENSCJAG00000043579">
    <property type="expression patterns" value="Expressed in ovary and 3 other cell types or tissues"/>
</dbReference>
<dbReference type="GO" id="GO:0005615">
    <property type="term" value="C:extracellular space"/>
    <property type="evidence" value="ECO:0007669"/>
    <property type="project" value="UniProtKB-KW"/>
</dbReference>
<dbReference type="GO" id="GO:0005125">
    <property type="term" value="F:cytokine activity"/>
    <property type="evidence" value="ECO:0007669"/>
    <property type="project" value="UniProtKB-KW"/>
</dbReference>
<dbReference type="GO" id="GO:0002250">
    <property type="term" value="P:adaptive immune response"/>
    <property type="evidence" value="ECO:0007669"/>
    <property type="project" value="UniProtKB-KW"/>
</dbReference>
<dbReference type="GO" id="GO:0006954">
    <property type="term" value="P:inflammatory response"/>
    <property type="evidence" value="ECO:0007669"/>
    <property type="project" value="UniProtKB-KW"/>
</dbReference>
<dbReference type="GO" id="GO:0045087">
    <property type="term" value="P:innate immune response"/>
    <property type="evidence" value="ECO:0007669"/>
    <property type="project" value="UniProtKB-KW"/>
</dbReference>
<dbReference type="FunFam" id="2.10.90.10:FF:000038">
    <property type="entry name" value="Interleukin-17A"/>
    <property type="match status" value="1"/>
</dbReference>
<dbReference type="Gene3D" id="2.10.90.10">
    <property type="entry name" value="Cystine-knot cytokines"/>
    <property type="match status" value="1"/>
</dbReference>
<dbReference type="InterPro" id="IPR029034">
    <property type="entry name" value="Cystine-knot_cytokine"/>
</dbReference>
<dbReference type="InterPro" id="IPR020440">
    <property type="entry name" value="IL-17_chr"/>
</dbReference>
<dbReference type="InterPro" id="IPR010345">
    <property type="entry name" value="IL-17_fam"/>
</dbReference>
<dbReference type="Pfam" id="PF06083">
    <property type="entry name" value="IL17"/>
    <property type="match status" value="1"/>
</dbReference>
<dbReference type="PRINTS" id="PR01932">
    <property type="entry name" value="INTRLEUKIN17"/>
</dbReference>
<dbReference type="SUPFAM" id="SSF57501">
    <property type="entry name" value="Cystine-knot cytokines"/>
    <property type="match status" value="1"/>
</dbReference>
<feature type="signal peptide" evidence="2">
    <location>
        <begin position="1"/>
        <end position="30"/>
    </location>
</feature>
<feature type="chain" id="PRO_0000378103" description="Interleukin-17F">
    <location>
        <begin position="31"/>
        <end position="163"/>
    </location>
</feature>
<feature type="glycosylation site" description="N-linked (GlcNAc...) asparagine" evidence="2">
    <location>
        <position position="83"/>
    </location>
</feature>
<feature type="disulfide bond" description="Interchain (with C-137)" evidence="2">
    <location>
        <position position="47"/>
    </location>
</feature>
<feature type="disulfide bond" evidence="2">
    <location>
        <begin position="102"/>
        <end position="152"/>
    </location>
</feature>
<feature type="disulfide bond" evidence="2">
    <location>
        <begin position="107"/>
        <end position="154"/>
    </location>
</feature>
<feature type="disulfide bond" description="Interchain (with C-47)" evidence="2">
    <location>
        <position position="137"/>
    </location>
</feature>